<reference key="1">
    <citation type="submission" date="2008-03" db="EMBL/GenBank/DDBJ databases">
        <title>Complete sequence of Leptothrix cholodnii SP-6.</title>
        <authorList>
            <consortium name="US DOE Joint Genome Institute"/>
            <person name="Copeland A."/>
            <person name="Lucas S."/>
            <person name="Lapidus A."/>
            <person name="Glavina del Rio T."/>
            <person name="Dalin E."/>
            <person name="Tice H."/>
            <person name="Bruce D."/>
            <person name="Goodwin L."/>
            <person name="Pitluck S."/>
            <person name="Chertkov O."/>
            <person name="Brettin T."/>
            <person name="Detter J.C."/>
            <person name="Han C."/>
            <person name="Kuske C.R."/>
            <person name="Schmutz J."/>
            <person name="Larimer F."/>
            <person name="Land M."/>
            <person name="Hauser L."/>
            <person name="Kyrpides N."/>
            <person name="Lykidis A."/>
            <person name="Emerson D."/>
            <person name="Richardson P."/>
        </authorList>
    </citation>
    <scope>NUCLEOTIDE SEQUENCE [LARGE SCALE GENOMIC DNA]</scope>
    <source>
        <strain>ATCC 51168 / LMG 8142 / SP-6</strain>
    </source>
</reference>
<gene>
    <name evidence="1" type="primary">dut</name>
    <name type="ordered locus">Lcho_2644</name>
</gene>
<proteinExistence type="inferred from homology"/>
<dbReference type="EC" id="3.6.1.23" evidence="1"/>
<dbReference type="EMBL" id="CP001013">
    <property type="protein sequence ID" value="ACB34909.1"/>
    <property type="molecule type" value="Genomic_DNA"/>
</dbReference>
<dbReference type="RefSeq" id="WP_012347665.1">
    <property type="nucleotide sequence ID" value="NC_010524.1"/>
</dbReference>
<dbReference type="SMR" id="B1Y839"/>
<dbReference type="STRING" id="395495.Lcho_2644"/>
<dbReference type="KEGG" id="lch:Lcho_2644"/>
<dbReference type="eggNOG" id="COG0756">
    <property type="taxonomic scope" value="Bacteria"/>
</dbReference>
<dbReference type="HOGENOM" id="CLU_068508_1_1_4"/>
<dbReference type="UniPathway" id="UPA00610">
    <property type="reaction ID" value="UER00666"/>
</dbReference>
<dbReference type="Proteomes" id="UP000001693">
    <property type="component" value="Chromosome"/>
</dbReference>
<dbReference type="GO" id="GO:0004170">
    <property type="term" value="F:dUTP diphosphatase activity"/>
    <property type="evidence" value="ECO:0007669"/>
    <property type="project" value="UniProtKB-UniRule"/>
</dbReference>
<dbReference type="GO" id="GO:0000287">
    <property type="term" value="F:magnesium ion binding"/>
    <property type="evidence" value="ECO:0007669"/>
    <property type="project" value="UniProtKB-UniRule"/>
</dbReference>
<dbReference type="GO" id="GO:0006226">
    <property type="term" value="P:dUMP biosynthetic process"/>
    <property type="evidence" value="ECO:0007669"/>
    <property type="project" value="UniProtKB-UniRule"/>
</dbReference>
<dbReference type="GO" id="GO:0046081">
    <property type="term" value="P:dUTP catabolic process"/>
    <property type="evidence" value="ECO:0007669"/>
    <property type="project" value="InterPro"/>
</dbReference>
<dbReference type="CDD" id="cd07557">
    <property type="entry name" value="trimeric_dUTPase"/>
    <property type="match status" value="1"/>
</dbReference>
<dbReference type="FunFam" id="2.70.40.10:FF:000002">
    <property type="entry name" value="dUTP diphosphatase"/>
    <property type="match status" value="1"/>
</dbReference>
<dbReference type="Gene3D" id="2.70.40.10">
    <property type="match status" value="1"/>
</dbReference>
<dbReference type="HAMAP" id="MF_00116">
    <property type="entry name" value="dUTPase_bact"/>
    <property type="match status" value="1"/>
</dbReference>
<dbReference type="InterPro" id="IPR008181">
    <property type="entry name" value="dUTPase"/>
</dbReference>
<dbReference type="InterPro" id="IPR029054">
    <property type="entry name" value="dUTPase-like"/>
</dbReference>
<dbReference type="InterPro" id="IPR036157">
    <property type="entry name" value="dUTPase-like_sf"/>
</dbReference>
<dbReference type="InterPro" id="IPR033704">
    <property type="entry name" value="dUTPase_trimeric"/>
</dbReference>
<dbReference type="NCBIfam" id="TIGR00576">
    <property type="entry name" value="dut"/>
    <property type="match status" value="1"/>
</dbReference>
<dbReference type="NCBIfam" id="NF001862">
    <property type="entry name" value="PRK00601.1"/>
    <property type="match status" value="1"/>
</dbReference>
<dbReference type="PANTHER" id="PTHR11241">
    <property type="entry name" value="DEOXYURIDINE 5'-TRIPHOSPHATE NUCLEOTIDOHYDROLASE"/>
    <property type="match status" value="1"/>
</dbReference>
<dbReference type="PANTHER" id="PTHR11241:SF0">
    <property type="entry name" value="DEOXYURIDINE 5'-TRIPHOSPHATE NUCLEOTIDOHYDROLASE"/>
    <property type="match status" value="1"/>
</dbReference>
<dbReference type="Pfam" id="PF00692">
    <property type="entry name" value="dUTPase"/>
    <property type="match status" value="1"/>
</dbReference>
<dbReference type="SUPFAM" id="SSF51283">
    <property type="entry name" value="dUTPase-like"/>
    <property type="match status" value="1"/>
</dbReference>
<evidence type="ECO:0000255" key="1">
    <source>
        <dbReference type="HAMAP-Rule" id="MF_00116"/>
    </source>
</evidence>
<accession>B1Y839</accession>
<keyword id="KW-0378">Hydrolase</keyword>
<keyword id="KW-0460">Magnesium</keyword>
<keyword id="KW-0479">Metal-binding</keyword>
<keyword id="KW-0546">Nucleotide metabolism</keyword>
<keyword id="KW-1185">Reference proteome</keyword>
<name>DUT_LEPCP</name>
<organism>
    <name type="scientific">Leptothrix cholodnii (strain ATCC 51168 / LMG 8142 / SP-6)</name>
    <name type="common">Leptothrix discophora (strain SP-6)</name>
    <dbReference type="NCBI Taxonomy" id="395495"/>
    <lineage>
        <taxon>Bacteria</taxon>
        <taxon>Pseudomonadati</taxon>
        <taxon>Pseudomonadota</taxon>
        <taxon>Betaproteobacteria</taxon>
        <taxon>Burkholderiales</taxon>
        <taxon>Sphaerotilaceae</taxon>
        <taxon>Leptothrix</taxon>
    </lineage>
</organism>
<feature type="chain" id="PRO_1000117570" description="Deoxyuridine 5'-triphosphate nucleotidohydrolase">
    <location>
        <begin position="1"/>
        <end position="150"/>
    </location>
</feature>
<feature type="binding site" evidence="1">
    <location>
        <begin position="69"/>
        <end position="71"/>
    </location>
    <ligand>
        <name>substrate</name>
    </ligand>
</feature>
<feature type="binding site" evidence="1">
    <location>
        <position position="82"/>
    </location>
    <ligand>
        <name>substrate</name>
    </ligand>
</feature>
<feature type="binding site" evidence="1">
    <location>
        <begin position="86"/>
        <end position="88"/>
    </location>
    <ligand>
        <name>substrate</name>
    </ligand>
</feature>
<feature type="binding site" evidence="1">
    <location>
        <position position="96"/>
    </location>
    <ligand>
        <name>substrate</name>
    </ligand>
</feature>
<sequence length="150" mass="15854">MNTQIEYKLLDARLAEQLPAYATPGAAGLDLRACIDLPLEIAPGQTTLIPTGIAIHIADPGLAAIILPRSGLGHKHGIVLGNLVGLIDSDYQGQLMVSCWNRGSVAYAVQPLERIAQLVIVPVVQAQFRQVDEFEASDRGVAGFGSTGRG</sequence>
<protein>
    <recommendedName>
        <fullName evidence="1">Deoxyuridine 5'-triphosphate nucleotidohydrolase</fullName>
        <shortName evidence="1">dUTPase</shortName>
        <ecNumber evidence="1">3.6.1.23</ecNumber>
    </recommendedName>
    <alternativeName>
        <fullName evidence="1">dUTP pyrophosphatase</fullName>
    </alternativeName>
</protein>
<comment type="function">
    <text evidence="1">This enzyme is involved in nucleotide metabolism: it produces dUMP, the immediate precursor of thymidine nucleotides and it decreases the intracellular concentration of dUTP so that uracil cannot be incorporated into DNA.</text>
</comment>
<comment type="catalytic activity">
    <reaction evidence="1">
        <text>dUTP + H2O = dUMP + diphosphate + H(+)</text>
        <dbReference type="Rhea" id="RHEA:10248"/>
        <dbReference type="ChEBI" id="CHEBI:15377"/>
        <dbReference type="ChEBI" id="CHEBI:15378"/>
        <dbReference type="ChEBI" id="CHEBI:33019"/>
        <dbReference type="ChEBI" id="CHEBI:61555"/>
        <dbReference type="ChEBI" id="CHEBI:246422"/>
        <dbReference type="EC" id="3.6.1.23"/>
    </reaction>
</comment>
<comment type="cofactor">
    <cofactor evidence="1">
        <name>Mg(2+)</name>
        <dbReference type="ChEBI" id="CHEBI:18420"/>
    </cofactor>
</comment>
<comment type="pathway">
    <text evidence="1">Pyrimidine metabolism; dUMP biosynthesis; dUMP from dCTP (dUTP route): step 2/2.</text>
</comment>
<comment type="similarity">
    <text evidence="1">Belongs to the dUTPase family.</text>
</comment>